<proteinExistence type="inferred from homology"/>
<dbReference type="EMBL" id="CP000923">
    <property type="protein sequence ID" value="ABY92634.1"/>
    <property type="molecule type" value="Genomic_DNA"/>
</dbReference>
<dbReference type="RefSeq" id="WP_003867915.1">
    <property type="nucleotide sequence ID" value="NC_010320.1"/>
</dbReference>
<dbReference type="SMR" id="B0K708"/>
<dbReference type="KEGG" id="tex:Teth514_1344"/>
<dbReference type="HOGENOM" id="CLU_038009_1_0_9"/>
<dbReference type="Proteomes" id="UP000002155">
    <property type="component" value="Chromosome"/>
</dbReference>
<dbReference type="GO" id="GO:0005829">
    <property type="term" value="C:cytosol"/>
    <property type="evidence" value="ECO:0007669"/>
    <property type="project" value="TreeGrafter"/>
</dbReference>
<dbReference type="GO" id="GO:0005886">
    <property type="term" value="C:plasma membrane"/>
    <property type="evidence" value="ECO:0007669"/>
    <property type="project" value="UniProtKB-SubCell"/>
</dbReference>
<dbReference type="GO" id="GO:0005525">
    <property type="term" value="F:GTP binding"/>
    <property type="evidence" value="ECO:0007669"/>
    <property type="project" value="UniProtKB-UniRule"/>
</dbReference>
<dbReference type="GO" id="GO:0003924">
    <property type="term" value="F:GTPase activity"/>
    <property type="evidence" value="ECO:0007669"/>
    <property type="project" value="UniProtKB-UniRule"/>
</dbReference>
<dbReference type="GO" id="GO:0043024">
    <property type="term" value="F:ribosomal small subunit binding"/>
    <property type="evidence" value="ECO:0007669"/>
    <property type="project" value="TreeGrafter"/>
</dbReference>
<dbReference type="GO" id="GO:0070181">
    <property type="term" value="F:small ribosomal subunit rRNA binding"/>
    <property type="evidence" value="ECO:0007669"/>
    <property type="project" value="UniProtKB-UniRule"/>
</dbReference>
<dbReference type="GO" id="GO:0000028">
    <property type="term" value="P:ribosomal small subunit assembly"/>
    <property type="evidence" value="ECO:0007669"/>
    <property type="project" value="TreeGrafter"/>
</dbReference>
<dbReference type="CDD" id="cd04163">
    <property type="entry name" value="Era"/>
    <property type="match status" value="1"/>
</dbReference>
<dbReference type="CDD" id="cd22534">
    <property type="entry name" value="KH-II_Era"/>
    <property type="match status" value="1"/>
</dbReference>
<dbReference type="FunFam" id="3.30.300.20:FF:000003">
    <property type="entry name" value="GTPase Era"/>
    <property type="match status" value="1"/>
</dbReference>
<dbReference type="FunFam" id="3.40.50.300:FF:000094">
    <property type="entry name" value="GTPase Era"/>
    <property type="match status" value="1"/>
</dbReference>
<dbReference type="Gene3D" id="3.30.300.20">
    <property type="match status" value="1"/>
</dbReference>
<dbReference type="Gene3D" id="3.40.50.300">
    <property type="entry name" value="P-loop containing nucleotide triphosphate hydrolases"/>
    <property type="match status" value="1"/>
</dbReference>
<dbReference type="HAMAP" id="MF_00367">
    <property type="entry name" value="GTPase_Era"/>
    <property type="match status" value="1"/>
</dbReference>
<dbReference type="InterPro" id="IPR030388">
    <property type="entry name" value="G_ERA_dom"/>
</dbReference>
<dbReference type="InterPro" id="IPR006073">
    <property type="entry name" value="GTP-bd"/>
</dbReference>
<dbReference type="InterPro" id="IPR005662">
    <property type="entry name" value="GTPase_Era-like"/>
</dbReference>
<dbReference type="InterPro" id="IPR015946">
    <property type="entry name" value="KH_dom-like_a/b"/>
</dbReference>
<dbReference type="InterPro" id="IPR004044">
    <property type="entry name" value="KH_dom_type_2"/>
</dbReference>
<dbReference type="InterPro" id="IPR009019">
    <property type="entry name" value="KH_sf_prok-type"/>
</dbReference>
<dbReference type="InterPro" id="IPR027417">
    <property type="entry name" value="P-loop_NTPase"/>
</dbReference>
<dbReference type="InterPro" id="IPR005225">
    <property type="entry name" value="Small_GTP-bd"/>
</dbReference>
<dbReference type="NCBIfam" id="TIGR00436">
    <property type="entry name" value="era"/>
    <property type="match status" value="1"/>
</dbReference>
<dbReference type="NCBIfam" id="NF000908">
    <property type="entry name" value="PRK00089.1"/>
    <property type="match status" value="1"/>
</dbReference>
<dbReference type="NCBIfam" id="TIGR00231">
    <property type="entry name" value="small_GTP"/>
    <property type="match status" value="1"/>
</dbReference>
<dbReference type="PANTHER" id="PTHR42698">
    <property type="entry name" value="GTPASE ERA"/>
    <property type="match status" value="1"/>
</dbReference>
<dbReference type="PANTHER" id="PTHR42698:SF1">
    <property type="entry name" value="GTPASE ERA, MITOCHONDRIAL"/>
    <property type="match status" value="1"/>
</dbReference>
<dbReference type="Pfam" id="PF07650">
    <property type="entry name" value="KH_2"/>
    <property type="match status" value="1"/>
</dbReference>
<dbReference type="Pfam" id="PF01926">
    <property type="entry name" value="MMR_HSR1"/>
    <property type="match status" value="1"/>
</dbReference>
<dbReference type="SUPFAM" id="SSF52540">
    <property type="entry name" value="P-loop containing nucleoside triphosphate hydrolases"/>
    <property type="match status" value="1"/>
</dbReference>
<dbReference type="SUPFAM" id="SSF54814">
    <property type="entry name" value="Prokaryotic type KH domain (KH-domain type II)"/>
    <property type="match status" value="1"/>
</dbReference>
<dbReference type="PROSITE" id="PS51713">
    <property type="entry name" value="G_ERA"/>
    <property type="match status" value="1"/>
</dbReference>
<dbReference type="PROSITE" id="PS50823">
    <property type="entry name" value="KH_TYPE_2"/>
    <property type="match status" value="1"/>
</dbReference>
<accession>B0K708</accession>
<protein>
    <recommendedName>
        <fullName evidence="1">GTPase Era</fullName>
    </recommendedName>
</protein>
<feature type="chain" id="PRO_1000121365" description="GTPase Era">
    <location>
        <begin position="1"/>
        <end position="302"/>
    </location>
</feature>
<feature type="domain" description="Era-type G" evidence="2">
    <location>
        <begin position="4"/>
        <end position="171"/>
    </location>
</feature>
<feature type="domain" description="KH type-2" evidence="1">
    <location>
        <begin position="202"/>
        <end position="280"/>
    </location>
</feature>
<feature type="region of interest" description="G1" evidence="2">
    <location>
        <begin position="12"/>
        <end position="19"/>
    </location>
</feature>
<feature type="region of interest" description="G2" evidence="2">
    <location>
        <begin position="38"/>
        <end position="42"/>
    </location>
</feature>
<feature type="region of interest" description="G3" evidence="2">
    <location>
        <begin position="59"/>
        <end position="62"/>
    </location>
</feature>
<feature type="region of interest" description="G4" evidence="2">
    <location>
        <begin position="121"/>
        <end position="124"/>
    </location>
</feature>
<feature type="region of interest" description="G5" evidence="2">
    <location>
        <begin position="150"/>
        <end position="152"/>
    </location>
</feature>
<feature type="binding site" evidence="1">
    <location>
        <begin position="12"/>
        <end position="19"/>
    </location>
    <ligand>
        <name>GTP</name>
        <dbReference type="ChEBI" id="CHEBI:37565"/>
    </ligand>
</feature>
<feature type="binding site" evidence="1">
    <location>
        <begin position="59"/>
        <end position="63"/>
    </location>
    <ligand>
        <name>GTP</name>
        <dbReference type="ChEBI" id="CHEBI:37565"/>
    </ligand>
</feature>
<feature type="binding site" evidence="1">
    <location>
        <begin position="121"/>
        <end position="124"/>
    </location>
    <ligand>
        <name>GTP</name>
        <dbReference type="ChEBI" id="CHEBI:37565"/>
    </ligand>
</feature>
<gene>
    <name evidence="1" type="primary">era</name>
    <name type="ordered locus">Teth514_1344</name>
</gene>
<organism>
    <name type="scientific">Thermoanaerobacter sp. (strain X514)</name>
    <dbReference type="NCBI Taxonomy" id="399726"/>
    <lineage>
        <taxon>Bacteria</taxon>
        <taxon>Bacillati</taxon>
        <taxon>Bacillota</taxon>
        <taxon>Clostridia</taxon>
        <taxon>Thermoanaerobacterales</taxon>
        <taxon>Thermoanaerobacteraceae</taxon>
        <taxon>Thermoanaerobacter</taxon>
    </lineage>
</organism>
<evidence type="ECO:0000255" key="1">
    <source>
        <dbReference type="HAMAP-Rule" id="MF_00367"/>
    </source>
</evidence>
<evidence type="ECO:0000255" key="2">
    <source>
        <dbReference type="PROSITE-ProRule" id="PRU01050"/>
    </source>
</evidence>
<comment type="function">
    <text evidence="1">An essential GTPase that binds both GDP and GTP, with rapid nucleotide exchange. Plays a role in 16S rRNA processing and 30S ribosomal subunit biogenesis and possibly also in cell cycle regulation and energy metabolism.</text>
</comment>
<comment type="subunit">
    <text evidence="1">Monomer.</text>
</comment>
<comment type="subcellular location">
    <subcellularLocation>
        <location>Cytoplasm</location>
    </subcellularLocation>
    <subcellularLocation>
        <location evidence="1">Cell membrane</location>
        <topology evidence="1">Peripheral membrane protein</topology>
    </subcellularLocation>
</comment>
<comment type="similarity">
    <text evidence="1 2">Belongs to the TRAFAC class TrmE-Era-EngA-EngB-Septin-like GTPase superfamily. Era GTPase family.</text>
</comment>
<sequence>MGHKAGFVALVGRTNVGKSTLLNAILQEKIAITSPKPQTTRNTIRGILTTDEYQVIFVDTPGIHKPKSKLSEFMIEVAKRTLKEVDLILYMIEPDTEVGPGDRYIIEHLKEVDTPVILVVNKIDLVPEKRVEETIKIFKEQYEFKDVVAISAIENKNIDLLKEKIVSLLPEGPKYYLDDYITDQPEKLIVAEIIREKMLHFLEEEVPHGVYVEVESIKEREDKDIIDIEAYIYCEKESHKGIIIGKNGQMLKKIGQSARLDLEEFYGKQVFLDLWVKTRKGWRDNTTLLKKLGYAIDKKTYE</sequence>
<name>ERA_THEPX</name>
<keyword id="KW-1003">Cell membrane</keyword>
<keyword id="KW-0963">Cytoplasm</keyword>
<keyword id="KW-0342">GTP-binding</keyword>
<keyword id="KW-0472">Membrane</keyword>
<keyword id="KW-0547">Nucleotide-binding</keyword>
<keyword id="KW-0690">Ribosome biogenesis</keyword>
<keyword id="KW-0694">RNA-binding</keyword>
<keyword id="KW-0699">rRNA-binding</keyword>
<reference key="1">
    <citation type="submission" date="2008-01" db="EMBL/GenBank/DDBJ databases">
        <title>Complete sequence of Thermoanaerobacter sp. X514.</title>
        <authorList>
            <consortium name="US DOE Joint Genome Institute"/>
            <person name="Copeland A."/>
            <person name="Lucas S."/>
            <person name="Lapidus A."/>
            <person name="Barry K."/>
            <person name="Glavina del Rio T."/>
            <person name="Dalin E."/>
            <person name="Tice H."/>
            <person name="Pitluck S."/>
            <person name="Bruce D."/>
            <person name="Goodwin L."/>
            <person name="Saunders E."/>
            <person name="Brettin T."/>
            <person name="Detter J.C."/>
            <person name="Han C."/>
            <person name="Schmutz J."/>
            <person name="Larimer F."/>
            <person name="Land M."/>
            <person name="Hauser L."/>
            <person name="Kyrpides N."/>
            <person name="Kim E."/>
            <person name="Hemme C."/>
            <person name="Fields M.W."/>
            <person name="He Z."/>
            <person name="Zhou J."/>
            <person name="Richardson P."/>
        </authorList>
    </citation>
    <scope>NUCLEOTIDE SEQUENCE [LARGE SCALE GENOMIC DNA]</scope>
    <source>
        <strain>X514</strain>
    </source>
</reference>